<keyword id="KW-0903">Direct protein sequencing</keyword>
<keyword id="KW-1015">Disulfide bond</keyword>
<keyword id="KW-0378">Hydrolase</keyword>
<keyword id="KW-0442">Lipid degradation</keyword>
<keyword id="KW-0443">Lipid metabolism</keyword>
<keyword id="KW-0964">Secreted</keyword>
<keyword id="KW-0719">Serine esterase</keyword>
<keyword id="KW-0732">Signal</keyword>
<proteinExistence type="evidence at protein level"/>
<evidence type="ECO:0000250" key="1">
    <source>
        <dbReference type="UniProtKB" id="A0A0K8P6T7"/>
    </source>
</evidence>
<evidence type="ECO:0000250" key="2">
    <source>
        <dbReference type="UniProtKB" id="Q47RJ6"/>
    </source>
</evidence>
<evidence type="ECO:0000255" key="3"/>
<evidence type="ECO:0000269" key="4">
    <source>
    </source>
</evidence>
<evidence type="ECO:0000269" key="5">
    <source>
    </source>
</evidence>
<evidence type="ECO:0000269" key="6">
    <source>
    </source>
</evidence>
<evidence type="ECO:0000269" key="7">
    <source>
    </source>
</evidence>
<evidence type="ECO:0000303" key="8">
    <source>
    </source>
</evidence>
<evidence type="ECO:0000303" key="9">
    <source>
    </source>
</evidence>
<evidence type="ECO:0000303" key="10">
    <source>
    </source>
</evidence>
<evidence type="ECO:0000303" key="11">
    <source>
    </source>
</evidence>
<evidence type="ECO:0000305" key="12"/>
<evidence type="ECO:0000305" key="13">
    <source>
    </source>
</evidence>
<evidence type="ECO:0000305" key="14">
    <source>
    </source>
</evidence>
<evidence type="ECO:0000305" key="15">
    <source>
    </source>
</evidence>
<evidence type="ECO:0000305" key="16">
    <source>
    </source>
</evidence>
<evidence type="ECO:0000312" key="17">
    <source>
        <dbReference type="EMBL" id="AEK46168.1"/>
    </source>
</evidence>
<evidence type="ECO:0000312" key="18">
    <source>
        <dbReference type="Proteomes" id="UP000006138"/>
    </source>
</evidence>
<feature type="signal peptide" evidence="3 5">
    <location>
        <begin position="1"/>
        <end position="47"/>
    </location>
</feature>
<feature type="chain" id="PRO_5003399567" description="Cutinase" evidence="3 14">
    <location>
        <begin position="48"/>
        <end position="309"/>
    </location>
</feature>
<feature type="active site" description="Nucleophile" evidence="1">
    <location>
        <position position="178"/>
    </location>
</feature>
<feature type="active site" description="Charge relay system" evidence="1">
    <location>
        <position position="224"/>
    </location>
</feature>
<feature type="active site" description="Charge relay system" evidence="1">
    <location>
        <position position="256"/>
    </location>
</feature>
<feature type="disulfide bond" evidence="1">
    <location>
        <begin position="289"/>
        <end position="305"/>
    </location>
</feature>
<feature type="sequence conflict" description="In Ref. 3; AA sequence." evidence="12" ref="3">
    <original>S</original>
    <variation>R</variation>
    <location>
        <position position="67"/>
    </location>
</feature>
<reference evidence="17 18" key="1">
    <citation type="journal article" date="2011" name="J. Bacteriol.">
        <title>Whole genome sequence of the rifamycin B-producing strain Amycolatopsis mediterranei S699.</title>
        <authorList>
            <person name="Verma M."/>
            <person name="Kaur J."/>
            <person name="Kumar M."/>
            <person name="Kumari K."/>
            <person name="Saxena A."/>
            <person name="Anand S."/>
            <person name="Nigam A."/>
            <person name="Ravi V."/>
            <person name="Raghuvanshi S."/>
            <person name="Khurana P."/>
            <person name="Tyagi A.K."/>
            <person name="Khurana J.P."/>
            <person name="Lal R."/>
        </authorList>
    </citation>
    <scope>NUCLEOTIDE SEQUENCE [LARGE SCALE GENOMIC DNA]</scope>
    <source>
        <strain evidence="18">S699</strain>
    </source>
</reference>
<reference key="2">
    <citation type="journal article" date="2022" name="World J. Microbiol. Biotechnol.">
        <title>Extracellular secretion of a cutinase with polyester-degrading potential by E. coli using a novel signal peptide from Amycolatopsis mediterranei.</title>
        <authorList>
            <person name="Tan Y."/>
            <person name="Henehan G.T."/>
            <person name="Kinsella G.K."/>
            <person name="Ryan B.J."/>
        </authorList>
    </citation>
    <scope>SYNTHETIC DNA SEQUENCE</scope>
    <scope>FUNCTION</scope>
    <scope>CATALYTIC ACTIVITY</scope>
    <scope>SUBCELLULAR LOCATION</scope>
    <scope>BIOTECHNOLOGY</scope>
</reference>
<reference key="3">
    <citation type="journal article" date="2011" name="Bioresour. Technol.">
        <title>Purification and properties of Amycolatopsis mediterranei DSM 43304 lipase and its potential in flavour ester synthesis.</title>
        <authorList>
            <person name="Dheeman D.S."/>
            <person name="Henehan G.T."/>
            <person name="Frias J.M."/>
        </authorList>
    </citation>
    <scope>PROTEIN SEQUENCE OF 48-67</scope>
    <scope>FUNCTION</scope>
    <scope>CATALYTIC ACTIVITY</scope>
    <scope>SUBSTRATE SPECIFICITY</scope>
    <scope>ACTIVITY REGULATION</scope>
    <scope>BIOPHYSICOCHEMICAL PROPERTIES</scope>
    <scope>BIOTECHNOLOGY</scope>
    <source>
        <strain evidence="9">ATCC 13685 / DSM 43304 / JCM 4789 / CCUG 43144 / KCC S-0789 / NBRC 13415 / NCIMB 9613 / NRRL B-3240 / Lepetit ME/83</strain>
    </source>
</reference>
<reference key="4">
    <citation type="journal article" date="2010" name="J. Ind. Microbiol. Biotechnol.">
        <title>Influence of cultivation conditions on the production of a thermostable extracellular lipase from Amycolatopsis mediterranei DSM 43304.</title>
        <authorList>
            <person name="Dheeman D.S."/>
            <person name="Frias J.M."/>
            <person name="Henehan G.T."/>
        </authorList>
    </citation>
    <scope>FUNCTION</scope>
    <scope>CATALYTIC ACTIVITY</scope>
    <scope>ACTIVITY REGULATION</scope>
    <scope>BIOPHYSICOCHEMICAL PROPERTIES</scope>
    <scope>SUBCELLULAR LOCATION</scope>
    <scope>BIOTECHNOLOGY</scope>
    <source>
        <strain evidence="8">ATCC 13685 / DSM 43304 / JCM 4789 / CCUG 43144 / KCC S-0789 / NBRC 13415 / NCIMB 9613 / NRRL B-3240 / Lepetit ME/83</strain>
    </source>
</reference>
<reference key="5">
    <citation type="journal article" date="2021" name="Comput. Struct. Biotechnol. J.">
        <title>An extracellular lipase from Amycolatopsis mediterannei is a cutinase with plastic degrading activity.</title>
        <authorList>
            <person name="Tan Y."/>
            <person name="Henehan G.T."/>
            <person name="Kinsella G.K."/>
            <person name="Ryan B.J."/>
        </authorList>
    </citation>
    <scope>FUNCTION</scope>
    <scope>CATALYTIC ACTIVITY</scope>
    <scope>SUBSTRATE SPECIFICITY</scope>
    <scope>BIOTECHNOLOGY</scope>
    <scope>3D-STRUCTURE MODELING</scope>
</reference>
<gene>
    <name evidence="11" type="primary">cut1</name>
    <name evidence="17" type="ordered locus">RAM_38505</name>
</gene>
<accession>P0DX29</accession>
<accession>A0A9R0UCV5</accession>
<name>PETH1_AMYMS</name>
<comment type="function">
    <text evidence="2 4 5 6 7">Catalyzes the hydrolysis of cutin, a polyester that forms the structure of plant cuticle (By similarity). Shows esterase activity towards p-nitrophenol-linked aliphatic esters (pNP-aliphatic esters) (PubMed:21145735, PubMed:33598102). Has a preference for medium chain length (C-4 to C-12) fatty acid esters (PubMed:21145735, PubMed:33598102). Active with p-nitrophenyl palmitate (p-NPP) as substrate (PubMed:19806375, PubMed:21145735, PubMed:35195792). Hydrolyzes triacylglycerol substrates non-specifically with a preference for long, unsaturated fatty acyl chains with the highest activity for triolein (PubMed:21145735). Substrates with cis-9 unsaturation are preferred over the saturated triacylglycerols (PubMed:21145735). Hydrolyzes a wide range of natural oils, especially olive oil, with relatively high activity (PubMed:21145735). Capable of catalyzing synthesis of the flavor ester isoamyl acetate by esterification of isoamyl alcohol using acetic acid as an acyl donor (PubMed:21145735). Degrades synthetic aliphatic polyesters, namely poly(1,4-butylene succinate) extended with 1,6-diisocyanatohexane (PBSc-D) and poly(epsilon-caprolactone) (PCL) plastics (PubMed:33598102). Does not degrade poly(lactic acid) (PLA) nor aromatic poly(ethylene terephthalate) (PET), the most abundant polyester plastic in the world (PubMed:33598102).</text>
</comment>
<comment type="catalytic activity">
    <reaction evidence="4 5 6 7">
        <text>a carboxylic ester + H2O = an alcohol + a carboxylate + H(+)</text>
        <dbReference type="Rhea" id="RHEA:21164"/>
        <dbReference type="ChEBI" id="CHEBI:15377"/>
        <dbReference type="ChEBI" id="CHEBI:15378"/>
        <dbReference type="ChEBI" id="CHEBI:29067"/>
        <dbReference type="ChEBI" id="CHEBI:30879"/>
        <dbReference type="ChEBI" id="CHEBI:33308"/>
        <dbReference type="EC" id="3.1.1.1"/>
    </reaction>
</comment>
<comment type="catalytic activity">
    <reaction evidence="5">
        <text>a triacylglycerol + H2O = a diacylglycerol + a fatty acid + H(+)</text>
        <dbReference type="Rhea" id="RHEA:12044"/>
        <dbReference type="ChEBI" id="CHEBI:15377"/>
        <dbReference type="ChEBI" id="CHEBI:15378"/>
        <dbReference type="ChEBI" id="CHEBI:17855"/>
        <dbReference type="ChEBI" id="CHEBI:18035"/>
        <dbReference type="ChEBI" id="CHEBI:28868"/>
        <dbReference type="EC" id="3.1.1.3"/>
    </reaction>
</comment>
<comment type="catalytic activity">
    <reaction evidence="5">
        <text>1,2,3-tri-(9Z-octadecenoyl)-glycerol + H2O = di-(9Z)-octadecenoylglycerol + (9Z)-octadecenoate + H(+)</text>
        <dbReference type="Rhea" id="RHEA:38575"/>
        <dbReference type="ChEBI" id="CHEBI:15377"/>
        <dbReference type="ChEBI" id="CHEBI:15378"/>
        <dbReference type="ChEBI" id="CHEBI:30823"/>
        <dbReference type="ChEBI" id="CHEBI:53753"/>
        <dbReference type="ChEBI" id="CHEBI:75945"/>
    </reaction>
</comment>
<comment type="catalytic activity">
    <reaction evidence="6">
        <text>(6-hydroxyhexanoyl)(n) + H2O = (6-hydroxyhexanoyl)(n-1) + 6-hydroxyhexanoate + H(+)</text>
        <dbReference type="Rhea" id="RHEA:75967"/>
        <dbReference type="Rhea" id="RHEA-COMP:18659"/>
        <dbReference type="Rhea" id="RHEA-COMP:18660"/>
        <dbReference type="ChEBI" id="CHEBI:15377"/>
        <dbReference type="ChEBI" id="CHEBI:15378"/>
        <dbReference type="ChEBI" id="CHEBI:32383"/>
        <dbReference type="ChEBI" id="CHEBI:195201"/>
    </reaction>
</comment>
<comment type="catalytic activity">
    <reaction evidence="2">
        <text>cutin + H2O = cutin monomers.</text>
        <dbReference type="EC" id="3.1.1.74"/>
    </reaction>
</comment>
<comment type="activity regulation">
    <text evidence="4 5">No effect on activity by SDS or chelating agents ethylenediaminetetraacetic acid (EDTA) or sodium citrate (PubMed:19806375, PubMed:21145735). No effect on activity by metal ions Ag(+), Ba(2+), Ca(2+), Co(2+), Cu(2+), Mn(2+), Ni(2+), Pb(2+) or Zn(2+) (PubMed:19806375, PubMed:21145735). Activated by 1 mM digitonin and sodium deoxycholate, and reducing agents 1 mM 1,4-dithiothreitol, beta-mercaptoethanol and ascorbic acid (PubMed:21145735). Activated by benzene, n-hexane, p-xylene and toluene (PubMed:19806375). Activated by Fe(3+) (PubMed:19806375, PubMed:21145735). Inhibited slightly by 1 mM of different chain length fatty acids, and only marginally by 6.0 M urea (PubMed:21145735). Inhibited strongly with chemical modification by reagents phenyl methyl sulfonylfluorid (PMSF), 1-ethyl-3-(3-dimethylaminopropyl) carbodiimide (EDAC), diethylpyrocarbonate (DEPC) and N-bromosuccinimide (NBS) (PubMed:21145735). Inhibited by pyridine, DMSO, t-butanol and dodecane (PubMed:19806375). Inhibited by Li(+), Hg(2+) and Mg(2+) (PubMed:19806375, PubMed:21145735). No inhibition with chemical modification by reagents N-acetylimidazole (NAI), citraconic anhydride (CA), iodoacetate (IA) and phenylglyoxal (PG) (PubMed:21145735).</text>
</comment>
<comment type="biophysicochemical properties">
    <kinetics>
        <KM evidence="5">0.099 mM for p-nitrophenyl palmitate (p-NPP) (at pH 8.0 and 60 degrees Celsius)</KM>
        <Vmax evidence="5">2.53 mmol/min/mg enzyme with p-nitrophenyl palmitate (p-NPP) as substrate (at pH 8.0 and 60 degrees Celsius)</Vmax>
        <text evidence="5">kcat is 1468 sec(-1) with p-nitrophenyl palmitate (p-NPP) as substrate (at pH 8.0 and 60 degrees Celsius).</text>
    </kinetics>
    <phDependence>
        <text evidence="4 5">Optimum pH is 8.0 with p-nitrophenyl palmitate (p-NPP) as substrate (PubMed:19806375, PubMed:21145735). At pH 7 and 9 displays around 90% of relative activity (PubMed:21145735). Stable at pH range 6-9 retaining over 95% of relative activity after 24 hours (PubMed:21145735). Stable even in acidic pH of 2-4 with more than 50% of residual activity after 24 hours (PubMed:19806375).</text>
    </phDependence>
    <temperatureDependence>
        <text evidence="4 5">Optimum temperature is 60 degrees Celsius with p-nitrophenyl palmitate (p-NPP) as substrate (PubMed:19806375, PubMed:21145735). Hydrolyzes p-NPP in the broad temperature range of 20-80 degrees Celsius (PubMed:19806375). Highly thermostable (PubMed:19806375, PubMed:21145735). Stable at 50-60 degrees Celsius retaining 90-100% of activity after 3 hours (PubMed:19806375, PubMed:21145735). Has a half-life of over 30 minutes at 70 degrees Celsius (PubMed:19806375).</text>
    </temperatureDependence>
</comment>
<comment type="subcellular location">
    <subcellularLocation>
        <location evidence="4 7">Secreted</location>
    </subcellularLocation>
</comment>
<comment type="biotechnology">
    <text evidence="13 14 15 16">May have potential in biocatalytic synthesis of esters by reverse hydrolysis, particularly in production of industrially important flavor and fragrance ester isoamyl acetate (PubMed:21145735). After 72 hours of reaction, a yield of 34.4% and 16.2% of isoamyl acetate is achieved using Celite-immobilized and free enzyme, respectively (PubMed:21145735). Due to high thermostability, organic solvent tolerance, activity in broad pH range, and specificity towards a broad substrate range, this protein may be a candidate for applications in non-aqueous biocatalytic processes including esterification of primary and secondary alcohols, random interesterification of different oils and fats in food industry, oil contaminated biodegradation and biodiesel production (PubMed:19806375, PubMed:21145735). Has potential for application in bioremediation of environmental plastics (PubMed:33598102). Recombinant protein expressed in E.coli may be tailored to degrade specific environmental polyester compounds (PubMed:35195792).</text>
</comment>
<comment type="similarity">
    <text evidence="12">Belongs to the AB hydrolase superfamily.</text>
</comment>
<sequence>MSALTSQPTSSGSSEKIPRLRGWRAKAAGVVLAALALTTGVAAPAPAAANPYERGPDPTTASIEATSGSFATSTVTVSRLAVSGFGGGTIYYPTTTTAGTFGALSIAPGFTATQSSIAWLGPRLASQGFVVFTIDTLTTSDQPDSRGRQLLASLDYLTQQSSVRSRIDSTRLGVVGHSMGGGGTLEAARSRPTLQAAVPLTAWDLTKNWSTLQVPTLVVGAQSDTVAPVASHSIPFYTSLPSTLDRAYLELRGASHFAPNSPNTTIAKYTLSWLKRFIDNDTRYEQFLCPIPSTSLSISDYRGNCPHNG</sequence>
<organism>
    <name type="scientific">Amycolatopsis mediterranei (strain S699)</name>
    <name type="common">Nocardia mediterranei</name>
    <dbReference type="NCBI Taxonomy" id="713604"/>
    <lineage>
        <taxon>Bacteria</taxon>
        <taxon>Bacillati</taxon>
        <taxon>Actinomycetota</taxon>
        <taxon>Actinomycetes</taxon>
        <taxon>Pseudonocardiales</taxon>
        <taxon>Pseudonocardiaceae</taxon>
        <taxon>Amycolatopsis</taxon>
    </lineage>
</organism>
<protein>
    <recommendedName>
        <fullName evidence="10 11">Cutinase</fullName>
        <ecNumber evidence="2">3.1.1.74</ecNumber>
    </recommendedName>
    <alternativeName>
        <fullName evidence="9 10">AML</fullName>
    </alternativeName>
    <alternativeName>
        <fullName evidence="11">AmCut</fullName>
    </alternativeName>
    <alternativeName>
        <fullName evidence="8 9 10">Lipase</fullName>
        <ecNumber evidence="4 5 6 7">3.1.1.1</ecNumber>
        <ecNumber evidence="5">3.1.1.3</ecNumber>
    </alternativeName>
</protein>
<dbReference type="EC" id="3.1.1.74" evidence="2"/>
<dbReference type="EC" id="3.1.1.1" evidence="4 5 6 7"/>
<dbReference type="EC" id="3.1.1.3" evidence="5"/>
<dbReference type="EMBL" id="CP002896">
    <property type="protein sequence ID" value="AEK46168.1"/>
    <property type="molecule type" value="Genomic_DNA"/>
</dbReference>
<dbReference type="RefSeq" id="WP_013229249.1">
    <property type="nucleotide sequence ID" value="NC_018266.1"/>
</dbReference>
<dbReference type="SMR" id="P0DX29"/>
<dbReference type="GeneID" id="92875126"/>
<dbReference type="KEGG" id="amm:AMES_7381"/>
<dbReference type="KEGG" id="amn:RAM_38505"/>
<dbReference type="PATRIC" id="fig|713604.12.peg.8010"/>
<dbReference type="Proteomes" id="UP000006138">
    <property type="component" value="Chromosome"/>
</dbReference>
<dbReference type="GO" id="GO:0005576">
    <property type="term" value="C:extracellular region"/>
    <property type="evidence" value="ECO:0000314"/>
    <property type="project" value="UniProtKB"/>
</dbReference>
<dbReference type="GO" id="GO:0106435">
    <property type="term" value="F:carboxylesterase activity"/>
    <property type="evidence" value="ECO:0000314"/>
    <property type="project" value="UniProtKB"/>
</dbReference>
<dbReference type="GO" id="GO:0050525">
    <property type="term" value="F:cutinase activity"/>
    <property type="evidence" value="ECO:0000250"/>
    <property type="project" value="UniProtKB"/>
</dbReference>
<dbReference type="GO" id="GO:0004806">
    <property type="term" value="F:triacylglycerol lipase activity"/>
    <property type="evidence" value="ECO:0000314"/>
    <property type="project" value="UniProtKB"/>
</dbReference>
<dbReference type="GO" id="GO:0051793">
    <property type="term" value="P:medium-chain fatty acid catabolic process"/>
    <property type="evidence" value="ECO:0000314"/>
    <property type="project" value="UniProtKB"/>
</dbReference>
<dbReference type="GO" id="GO:0019433">
    <property type="term" value="P:triglyceride catabolic process"/>
    <property type="evidence" value="ECO:0000314"/>
    <property type="project" value="UniProtKB"/>
</dbReference>
<dbReference type="Gene3D" id="3.40.50.1820">
    <property type="entry name" value="alpha/beta hydrolase"/>
    <property type="match status" value="1"/>
</dbReference>
<dbReference type="InterPro" id="IPR029058">
    <property type="entry name" value="AB_hydrolase_fold"/>
</dbReference>
<dbReference type="InterPro" id="IPR050261">
    <property type="entry name" value="FrsA_esterase"/>
</dbReference>
<dbReference type="InterPro" id="IPR041127">
    <property type="entry name" value="PET_hydrolase/cutinase-like"/>
</dbReference>
<dbReference type="PANTHER" id="PTHR22946">
    <property type="entry name" value="DIENELACTONE HYDROLASE DOMAIN-CONTAINING PROTEIN-RELATED"/>
    <property type="match status" value="1"/>
</dbReference>
<dbReference type="PANTHER" id="PTHR22946:SF9">
    <property type="entry name" value="POLYKETIDE TRANSFERASE AF380"/>
    <property type="match status" value="1"/>
</dbReference>
<dbReference type="Pfam" id="PF12740">
    <property type="entry name" value="PETase"/>
    <property type="match status" value="1"/>
</dbReference>
<dbReference type="SUPFAM" id="SSF53474">
    <property type="entry name" value="alpha/beta-Hydrolases"/>
    <property type="match status" value="1"/>
</dbReference>